<gene>
    <name type="primary">gag-pro-pol</name>
</gene>
<proteinExistence type="inferred from homology"/>
<accession>Q0R5R2</accession>
<organism>
    <name type="scientific">Human T-cell leukemia virus 3 (strain 2026ND)</name>
    <name type="common">HTLV-3</name>
    <dbReference type="NCBI Taxonomy" id="402036"/>
    <lineage>
        <taxon>Viruses</taxon>
        <taxon>Riboviria</taxon>
        <taxon>Pararnavirae</taxon>
        <taxon>Artverviricota</taxon>
        <taxon>Revtraviricetes</taxon>
        <taxon>Ortervirales</taxon>
        <taxon>Retroviridae</taxon>
        <taxon>Orthoretrovirinae</taxon>
        <taxon>Deltaretrovirus</taxon>
        <taxon>Primate T-lymphotropic virus 3</taxon>
    </lineage>
</organism>
<protein>
    <recommendedName>
        <fullName>Gag-Pro-Pol polyprotein</fullName>
    </recommendedName>
    <alternativeName>
        <fullName>Pr160Gag-Pro-Pol</fullName>
    </alternativeName>
    <component>
        <recommendedName>
            <fullName>Matrix protein p19</fullName>
            <shortName>MA</shortName>
        </recommendedName>
    </component>
    <component>
        <recommendedName>
            <fullName>Capsid protein p24</fullName>
            <shortName>CA</shortName>
        </recommendedName>
    </component>
    <component>
        <recommendedName>
            <fullName>Nucleocapsid protein p15-pro</fullName>
            <shortName>NC'</shortName>
            <shortName>NC-pro</shortName>
        </recommendedName>
    </component>
    <component>
        <recommendedName>
            <fullName>Protease</fullName>
            <shortName>PR</shortName>
            <ecNumber>3.4.23.-</ecNumber>
        </recommendedName>
    </component>
    <component>
        <recommendedName>
            <fullName>p1</fullName>
        </recommendedName>
    </component>
    <component>
        <recommendedName>
            <fullName>Reverse transcriptase/ribonuclease H</fullName>
            <shortName>RT</shortName>
            <ecNumber>2.7.7.49</ecNumber>
            <ecNumber>2.7.7.7</ecNumber>
            <ecNumber>3.1.26.4</ecNumber>
        </recommendedName>
    </component>
    <component>
        <recommendedName>
            <fullName>Integrase</fullName>
            <shortName>IN</shortName>
            <ecNumber evidence="2">2.7.7.-</ecNumber>
            <ecNumber evidence="2">3.1.-.-</ecNumber>
        </recommendedName>
    </component>
</protein>
<name>POL_HTL32</name>
<reference key="1">
    <citation type="journal article" date="2006" name="J. Virol.">
        <title>Ancient origin and molecular features of the novel human T-lymphotropic virus type 3 revealed by complete genome analysis.</title>
        <authorList>
            <person name="Switzer W.M."/>
            <person name="Qari S.H."/>
            <person name="Wolfe N.D."/>
            <person name="Burke D.S."/>
            <person name="Folks T.M."/>
            <person name="Heneine W."/>
        </authorList>
    </citation>
    <scope>NUCLEOTIDE SEQUENCE [GENOMIC DNA]</scope>
</reference>
<comment type="function">
    <text evidence="1">Matrix protein p19 targets Gag, Gag-Pro and Gag-Pro-Pol polyproteins to the plasma membrane via a multipartite membrane binding signal, that includes its myristoylated N-terminus. Also mediates nuclear localization of the preintegration complex (By similarity).</text>
</comment>
<comment type="function">
    <text evidence="1">Capsid protein p24 forms the conical core of the virus that encapsulates the genomic RNA-nucleocapsid complex.</text>
</comment>
<comment type="function">
    <text evidence="1">Nucleocapsid protein p15 is involved in the packaging and encapsidation of two copies of the genome.</text>
</comment>
<comment type="function">
    <text evidence="1">The aspartyl protease mediates proteolytic cleavages of Gag, Gag-Pro and Gag-Pro-Pol polyproteins during or shortly after the release of the virion from the plasma membrane. Cleavages take place as an ordered, step-wise cascade to yield mature proteins. This process is called maturation. Displays maximal activity during the budding process just prior to particle release from the cell. Hydrolyzes host EIF4GI in order to shut off the capped cellular mRNA translation. The resulting inhibition of cellular protein synthesis serves to ensure maximal viral gene expression and to evade host immune response (By similarity).</text>
</comment>
<comment type="function">
    <text evidence="1">Reverse transcriptase (RT) is a multifunctional enzyme that converts the viral RNA genome into dsDNA in the cytoplasm, shortly after virus entry into the cell. This enzyme displays a DNA polymerase activity that can copy either DNA or RNA templates, and a ribonuclease H (RNase H) activity that cleaves the RNA strand of RNA-DNA heteroduplexes in a partially processive 3' to 5'-endonucleasic mode. Conversion of viral genomic RNA into dsDNA requires many steps. A tRNA-Pro binds to the primer-binding site (PBS) situated at the 5'-end of the viral RNA. RT uses the 3' end of the tRNA primer to perform a short round of RNA-dependent minus-strand DNA synthesis. The reading proceeds through the U5 region and ends after the repeated (R) region which is present at both ends of viral RNA. The portion of the RNA-DNA heteroduplex is digested by the RNase H, resulting in a ssDNA product attached to the tRNA primer. This ssDNA/tRNA hybridizes with the identical R region situated at the 3' end of viral RNA. This template exchange, known as minus-strand DNA strong stop transfer, can be either intra- or intermolecular. RT uses the 3' end of this newly synthesized short ssDNA to perform the RNA-dependent minus-strand DNA synthesis of the whole template. RNase H digests the RNA template except for a polypurine tract (PPT) situated at the 5' end of the genome. It is not clear if both polymerase and RNase H activities are simultaneous. RNase H probably can proceed both in a polymerase-dependent (RNA cut into small fragments by the same RT performing DNA synthesis) and a polymerase-independent mode (cleavage of remaining RNA fragments by free RTs). Secondly, RT performs DNA-directed plus-strand DNA synthesis using the PPT that has not been removed by RNase H as primer. PPT and tRNA primers are then removed by RNase H. The 3' and 5' ssDNA PBS regions hybridize to form a circular dsDNA intermediate. Strand displacement synthesis by RT to the PBS and PPT ends produces a blunt ended, linear dsDNA copy of the viral genome that includes long terminal repeats (LTRs) at both ends (By similarity).</text>
</comment>
<comment type="function">
    <text evidence="1">Integrase catalyzes viral DNA integration into the host chromosome, by performing a series of DNA cutting and joining reactions. This enzyme activity takes place after virion entry into a cell and reverse transcription of the RNA genome in dsDNA. The first step in the integration process is 3' processing. This step requires a complex comprising the viral genome, matrix protein, and integrase. This complex is called the pre-integration complex (PIC). The integrase protein removes 2 nucleotides from each 3' end of the viral DNA, leaving recessed dinucleotides OH's at the 3' ends. In the second step, the PIC access cell chromosomes during cell division. The third step, termed strand transfer, the integrase protein joins the previously processed 3' ends to the 5'-ends of strands of target cellular DNA at the site of integration. The 5'-ends are produced by integrase-catalyzed staggered cuts, 5 bp apart. A Y-shaped, gapped, recombination intermediate results, with the 5'-ends of the viral DNA strands and the 3' ends of target DNA strands remaining unjoined, flanking a gap of 5 bp. The last step is viral DNA integration into host chromosome. This involves host DNA repair synthesis in which the 5 bp gaps between the unjoined strands (see above) are filled in and then ligated (By similarity).</text>
</comment>
<comment type="catalytic activity">
    <reaction evidence="6">
        <text>Endonucleolytic cleavage to 5'-phosphomonoester.</text>
        <dbReference type="EC" id="3.1.26.4"/>
    </reaction>
</comment>
<comment type="catalytic activity">
    <reaction evidence="5">
        <text>DNA(n) + a 2'-deoxyribonucleoside 5'-triphosphate = DNA(n+1) + diphosphate</text>
        <dbReference type="Rhea" id="RHEA:22508"/>
        <dbReference type="Rhea" id="RHEA-COMP:17339"/>
        <dbReference type="Rhea" id="RHEA-COMP:17340"/>
        <dbReference type="ChEBI" id="CHEBI:33019"/>
        <dbReference type="ChEBI" id="CHEBI:61560"/>
        <dbReference type="ChEBI" id="CHEBI:173112"/>
        <dbReference type="EC" id="2.7.7.49"/>
    </reaction>
</comment>
<comment type="catalytic activity">
    <reaction evidence="5">
        <text>DNA(n) + a 2'-deoxyribonucleoside 5'-triphosphate = DNA(n+1) + diphosphate</text>
        <dbReference type="Rhea" id="RHEA:22508"/>
        <dbReference type="Rhea" id="RHEA-COMP:17339"/>
        <dbReference type="Rhea" id="RHEA-COMP:17340"/>
        <dbReference type="ChEBI" id="CHEBI:33019"/>
        <dbReference type="ChEBI" id="CHEBI:61560"/>
        <dbReference type="ChEBI" id="CHEBI:173112"/>
        <dbReference type="EC" id="2.7.7.7"/>
    </reaction>
</comment>
<comment type="cofactor">
    <cofactor evidence="1">
        <name>Mg(2+)</name>
        <dbReference type="ChEBI" id="CHEBI:18420"/>
    </cofactor>
    <text evidence="1">Binds 2 magnesium ions for reverse transcriptase polymerase activity.</text>
</comment>
<comment type="cofactor">
    <cofactor evidence="1">
        <name>Mg(2+)</name>
        <dbReference type="ChEBI" id="CHEBI:18420"/>
    </cofactor>
    <text evidence="1">Binds 2 magnesium ions for ribonuclease H (RNase H) activity.</text>
</comment>
<comment type="subunit">
    <text evidence="1">Interacts with human TSG101. This interaction is essential for budding and release of viral particles (By similarity).</text>
</comment>
<comment type="subcellular location">
    <molecule>Matrix protein p19</molecule>
    <subcellularLocation>
        <location evidence="11">Virion</location>
    </subcellularLocation>
</comment>
<comment type="subcellular location">
    <molecule>Capsid protein p24</molecule>
    <subcellularLocation>
        <location evidence="11">Virion</location>
    </subcellularLocation>
</comment>
<comment type="subcellular location">
    <molecule>Nucleocapsid protein p15-pro</molecule>
    <subcellularLocation>
        <location evidence="11">Virion</location>
    </subcellularLocation>
</comment>
<comment type="alternative products">
    <event type="ribosomal frameshifting"/>
    <isoform>
        <id>Q0R5R2-1</id>
        <name>Gag-Pol polyprotein</name>
        <sequence type="displayed"/>
    </isoform>
    <isoform>
        <id>Q0R5R3-1</id>
        <name>Gag-Pro polyprotein</name>
        <sequence type="external"/>
    </isoform>
    <isoform>
        <id>Q0R5R4-1</id>
        <name>Gag polyprotein</name>
        <sequence type="external"/>
    </isoform>
    <text>This strategy of translation probably allows the virus to modulate the quantity of each viral protein.</text>
</comment>
<comment type="domain">
    <text evidence="1">Late-budding domains (L domains) are short sequence motifs essential for viral particle release. They can occur individually or in close proximity within structural proteins. They interacts with sorting cellular proteins of the multivesicular body (MVB) pathway. Most of these proteins are class E vacuolar protein sorting factors belonging to ESCRT-I, ESCRT-II or ESCRT-III complexes. Matrix protein p19 contains two L domains: a PTAP/PSAP motif which interacts with the UEV domain of TSG101, and a PPXY motif which binds to the WW domains of HECT (homologous to E6-AP C-terminus) E3 ubiquitin ligases (By similarity).</text>
</comment>
<comment type="domain">
    <text evidence="1">The capsid protein N-terminus seems to be involved in Gag-Gag interactions.</text>
</comment>
<comment type="PTM">
    <text evidence="1">Specific enzymatic cleavages by the viral protease yield mature proteins. The polyprotein is cleaved during and after budding, this process is termed maturation. The protease is autoproteolytically processed at its N- and C-termini (By similarity).</text>
</comment>
<comment type="miscellaneous">
    <text evidence="1">The reverse transcriptase is an error-prone enzyme that lacks a proof-reading function. High mutations rate is a direct consequence of this characteristic. RT also displays frequent template switching leading to high recombination rate. Recombination mostly occurs between homologous regions of the two copackaged RNA genomes. If these two RNA molecules derive from different viral strains, reverse transcription will give rise to highly recombinated proviral DNAs (By similarity).</text>
</comment>
<comment type="miscellaneous">
    <molecule>Isoform Gag-Pol polyprotein</molecule>
    <text>Produced by -1 ribosomal frameshifting at the gag-pol genes boundary.</text>
</comment>
<sequence length="1440" mass="159835">MGKTYSSPINPIPKAPKGLAIHHWLNFLQAAYRLQPGPSEFDFHQLRKFLKLAIKTPVWLNPINYSVLAGLIPKNYPGRVHEIVAILIQETPAREAPPSAPLAEDPQKPPPYPEQAQEASQCLPILHPHGAPAAHRPWQMKDLQAIKQEVSSSAPGSPQFMQTIRLAVQQFDPTAKDLHDLLQYLCSSLVASLHHQQLETLIAQAETQGITGYNPLAGPLRIQANNPNQQGLRKEYQNLWLSAFSALPGNTKDPTWAAILQGPEEPFGSFVERLNVALDNGLPEGTPKDPILRSLAYSNANKECQKLLQARGQTNSPLGEMLRACQTWTPRDKNKILMVQPKKTPPPNQPCFRCGQVGHWSRDCKQPRPPPGPCPVCQDPTHWKRDCPQLKTDTRDSEDLLLDLPCEAPNVRERKNLLRGGGLASPRTILPLIPLSQQKQPTLHIQVSFSNTPPVSVQALLDTGADITVLPACLCPPDSNLQDTTVLGAGGPSTNKFKILPCPVHIHLPFRRQPVTLTACLIDINNQWTILGRDALQQCQSSLYLADQPSKVLPVLAPKLIGLEHLPPPPEVSQFPLNPERLQALTDLVSRALEAKHIEPYQGPGNNPIFPVKKPNGKWRFIHDLRATNSVTRDLASPSPGPPDLTSLPQGLPHLRTIDLTDAFFQIPLPTIFQPYFAFTLPQPNNYGPGTRYSWRVLPQGFKNSPTLFEQQLSHILTPVRKTFPNSLIIQYMDDILLASPAPGELAALTDKVTNALTKEGLPLSPEKTQATPGPIHFLGQVISQDCITYETLPSINVKSTWSLAELQSMLGELQWVSKGTPVLRSSLHQLYLALRGHRDPRDTIKLTSIQVQALRTIQKALTLNCRSRLVNQLPILALIMLRPTGTTAVLFQTKQKWPLVWLHTPHPATSLRPWGQLLANAVIILDKYSLQHYGQVCKSFHHNISNQALTYYLHTSDQSSVAILLQHSHRFHNLGAQPSGPWRSLLQMPQIFQNIDVLRPPFTISPVVINHAPCLFSDGSASKAAFIIWDRQVIHQQVLSLPSTCSAQAGELFGLLAGLQKSQPWVALNIFLDSKFLIGHLRRMALGAFPGPSTQCELHTQLLPLLQGKTVYVHHVRSHTLLQDPISRLNEATDALMLAPLLPLDPTTLHQLTHCNPYALRNHGATASEAHAIVQACHTCKVINPQGRLPQGYIRRGHAPNDIWQGDVTHLQYKRYKYCLLVWVDTYSGAVSVSCRRKETGSDCVASLLVAISILGKPQNINTDNGAAYLSQEFQQFCNSLAIKHSTHIPYNPTSSGLVERTNGILKTLISKYLLDNHHLPLETAVSKSLWTINHLNVLPSCQKTRWQLHQAQPLPPVPEDTLPPHTSPKWYYYKIPGLTNSRWSGPVQSLKEAAGAALIPVGGSYLWIPWRLLKRGICPRPESSAAVDPKTRDHQLHG</sequence>
<dbReference type="EC" id="3.4.23.-"/>
<dbReference type="EC" id="2.7.7.49"/>
<dbReference type="EC" id="2.7.7.7"/>
<dbReference type="EC" id="3.1.26.4"/>
<dbReference type="EC" id="2.7.7.-" evidence="2"/>
<dbReference type="EC" id="3.1.-.-" evidence="2"/>
<dbReference type="EMBL" id="DQ093792">
    <property type="protein sequence ID" value="AAZ77658.1"/>
    <property type="molecule type" value="Genomic_DNA"/>
</dbReference>
<dbReference type="SMR" id="Q0R5R2"/>
<dbReference type="Proteomes" id="UP000008029">
    <property type="component" value="Genome"/>
</dbReference>
<dbReference type="GO" id="GO:0019013">
    <property type="term" value="C:viral nucleocapsid"/>
    <property type="evidence" value="ECO:0007669"/>
    <property type="project" value="UniProtKB-KW"/>
</dbReference>
<dbReference type="GO" id="GO:0004190">
    <property type="term" value="F:aspartic-type endopeptidase activity"/>
    <property type="evidence" value="ECO:0007669"/>
    <property type="project" value="UniProtKB-KW"/>
</dbReference>
<dbReference type="GO" id="GO:0003677">
    <property type="term" value="F:DNA binding"/>
    <property type="evidence" value="ECO:0007669"/>
    <property type="project" value="UniProtKB-KW"/>
</dbReference>
<dbReference type="GO" id="GO:0003887">
    <property type="term" value="F:DNA-directed DNA polymerase activity"/>
    <property type="evidence" value="ECO:0007669"/>
    <property type="project" value="UniProtKB-EC"/>
</dbReference>
<dbReference type="GO" id="GO:0035613">
    <property type="term" value="F:RNA stem-loop binding"/>
    <property type="evidence" value="ECO:0007669"/>
    <property type="project" value="TreeGrafter"/>
</dbReference>
<dbReference type="GO" id="GO:0003964">
    <property type="term" value="F:RNA-directed DNA polymerase activity"/>
    <property type="evidence" value="ECO:0007669"/>
    <property type="project" value="UniProtKB-KW"/>
</dbReference>
<dbReference type="GO" id="GO:0004523">
    <property type="term" value="F:RNA-DNA hybrid ribonuclease activity"/>
    <property type="evidence" value="ECO:0007669"/>
    <property type="project" value="UniProtKB-EC"/>
</dbReference>
<dbReference type="GO" id="GO:0005198">
    <property type="term" value="F:structural molecule activity"/>
    <property type="evidence" value="ECO:0007669"/>
    <property type="project" value="InterPro"/>
</dbReference>
<dbReference type="GO" id="GO:0008270">
    <property type="term" value="F:zinc ion binding"/>
    <property type="evidence" value="ECO:0007669"/>
    <property type="project" value="UniProtKB-KW"/>
</dbReference>
<dbReference type="GO" id="GO:0015074">
    <property type="term" value="P:DNA integration"/>
    <property type="evidence" value="ECO:0007669"/>
    <property type="project" value="UniProtKB-KW"/>
</dbReference>
<dbReference type="GO" id="GO:0006310">
    <property type="term" value="P:DNA recombination"/>
    <property type="evidence" value="ECO:0007669"/>
    <property type="project" value="UniProtKB-KW"/>
</dbReference>
<dbReference type="GO" id="GO:0075713">
    <property type="term" value="P:establishment of integrated proviral latency"/>
    <property type="evidence" value="ECO:0007669"/>
    <property type="project" value="UniProtKB-KW"/>
</dbReference>
<dbReference type="GO" id="GO:0006508">
    <property type="term" value="P:proteolysis"/>
    <property type="evidence" value="ECO:0007669"/>
    <property type="project" value="UniProtKB-KW"/>
</dbReference>
<dbReference type="GO" id="GO:0046718">
    <property type="term" value="P:symbiont entry into host cell"/>
    <property type="evidence" value="ECO:0007669"/>
    <property type="project" value="UniProtKB-KW"/>
</dbReference>
<dbReference type="GO" id="GO:0039657">
    <property type="term" value="P:symbiont-mediated suppression of host gene expression"/>
    <property type="evidence" value="ECO:0007669"/>
    <property type="project" value="UniProtKB-KW"/>
</dbReference>
<dbReference type="GO" id="GO:0044826">
    <property type="term" value="P:viral genome integration into host DNA"/>
    <property type="evidence" value="ECO:0007669"/>
    <property type="project" value="UniProtKB-KW"/>
</dbReference>
<dbReference type="GO" id="GO:0075523">
    <property type="term" value="P:viral translational frameshifting"/>
    <property type="evidence" value="ECO:0007669"/>
    <property type="project" value="UniProtKB-KW"/>
</dbReference>
<dbReference type="Gene3D" id="1.10.1200.30">
    <property type="match status" value="1"/>
</dbReference>
<dbReference type="Gene3D" id="3.30.70.270">
    <property type="match status" value="2"/>
</dbReference>
<dbReference type="Gene3D" id="2.40.70.10">
    <property type="entry name" value="Acid Proteases"/>
    <property type="match status" value="1"/>
</dbReference>
<dbReference type="Gene3D" id="3.10.10.10">
    <property type="entry name" value="HIV Type 1 Reverse Transcriptase, subunit A, domain 1"/>
    <property type="match status" value="1"/>
</dbReference>
<dbReference type="Gene3D" id="1.10.375.10">
    <property type="entry name" value="Human Immunodeficiency Virus Type 1 Capsid Protein"/>
    <property type="match status" value="1"/>
</dbReference>
<dbReference type="Gene3D" id="3.30.420.10">
    <property type="entry name" value="Ribonuclease H-like superfamily/Ribonuclease H"/>
    <property type="match status" value="2"/>
</dbReference>
<dbReference type="Gene3D" id="4.10.60.10">
    <property type="entry name" value="Zinc finger, CCHC-type"/>
    <property type="match status" value="1"/>
</dbReference>
<dbReference type="InterPro" id="IPR001969">
    <property type="entry name" value="Aspartic_peptidase_AS"/>
</dbReference>
<dbReference type="InterPro" id="IPR003139">
    <property type="entry name" value="D_retro_matrix"/>
</dbReference>
<dbReference type="InterPro" id="IPR043502">
    <property type="entry name" value="DNA/RNA_pol_sf"/>
</dbReference>
<dbReference type="InterPro" id="IPR045345">
    <property type="entry name" value="Gag_p24_C"/>
</dbReference>
<dbReference type="InterPro" id="IPR001037">
    <property type="entry name" value="Integrase_C_retrovir"/>
</dbReference>
<dbReference type="InterPro" id="IPR001584">
    <property type="entry name" value="Integrase_cat-core"/>
</dbReference>
<dbReference type="InterPro" id="IPR003308">
    <property type="entry name" value="Integrase_Zn-bd_dom_N"/>
</dbReference>
<dbReference type="InterPro" id="IPR001995">
    <property type="entry name" value="Peptidase_A2_cat"/>
</dbReference>
<dbReference type="InterPro" id="IPR021109">
    <property type="entry name" value="Peptidase_aspartic_dom_sf"/>
</dbReference>
<dbReference type="InterPro" id="IPR018061">
    <property type="entry name" value="Retropepsins"/>
</dbReference>
<dbReference type="InterPro" id="IPR008916">
    <property type="entry name" value="Retrov_capsid_C"/>
</dbReference>
<dbReference type="InterPro" id="IPR008919">
    <property type="entry name" value="Retrov_capsid_N"/>
</dbReference>
<dbReference type="InterPro" id="IPR010999">
    <property type="entry name" value="Retrovr_matrix"/>
</dbReference>
<dbReference type="InterPro" id="IPR043128">
    <property type="entry name" value="Rev_trsase/Diguanyl_cyclase"/>
</dbReference>
<dbReference type="InterPro" id="IPR012337">
    <property type="entry name" value="RNaseH-like_sf"/>
</dbReference>
<dbReference type="InterPro" id="IPR002156">
    <property type="entry name" value="RNaseH_domain"/>
</dbReference>
<dbReference type="InterPro" id="IPR036397">
    <property type="entry name" value="RNaseH_sf"/>
</dbReference>
<dbReference type="InterPro" id="IPR000477">
    <property type="entry name" value="RT_dom"/>
</dbReference>
<dbReference type="InterPro" id="IPR001878">
    <property type="entry name" value="Znf_CCHC"/>
</dbReference>
<dbReference type="InterPro" id="IPR036875">
    <property type="entry name" value="Znf_CCHC_sf"/>
</dbReference>
<dbReference type="PANTHER" id="PTHR41694">
    <property type="entry name" value="ENDOGENOUS RETROVIRUS GROUP K MEMBER POL PROTEIN"/>
    <property type="match status" value="1"/>
</dbReference>
<dbReference type="PANTHER" id="PTHR41694:SF3">
    <property type="entry name" value="RNA-DIRECTED DNA POLYMERASE-RELATED"/>
    <property type="match status" value="1"/>
</dbReference>
<dbReference type="Pfam" id="PF02228">
    <property type="entry name" value="Gag_p19"/>
    <property type="match status" value="1"/>
</dbReference>
<dbReference type="Pfam" id="PF00607">
    <property type="entry name" value="Gag_p24"/>
    <property type="match status" value="1"/>
</dbReference>
<dbReference type="Pfam" id="PF19317">
    <property type="entry name" value="Gag_p24_C"/>
    <property type="match status" value="1"/>
</dbReference>
<dbReference type="Pfam" id="PF00552">
    <property type="entry name" value="IN_DBD_C"/>
    <property type="match status" value="1"/>
</dbReference>
<dbReference type="Pfam" id="PF02022">
    <property type="entry name" value="Integrase_Zn"/>
    <property type="match status" value="1"/>
</dbReference>
<dbReference type="Pfam" id="PF00075">
    <property type="entry name" value="RNase_H"/>
    <property type="match status" value="1"/>
</dbReference>
<dbReference type="Pfam" id="PF00665">
    <property type="entry name" value="rve"/>
    <property type="match status" value="1"/>
</dbReference>
<dbReference type="Pfam" id="PF00077">
    <property type="entry name" value="RVP"/>
    <property type="match status" value="1"/>
</dbReference>
<dbReference type="Pfam" id="PF00078">
    <property type="entry name" value="RVT_1"/>
    <property type="match status" value="1"/>
</dbReference>
<dbReference type="Pfam" id="PF00098">
    <property type="entry name" value="zf-CCHC"/>
    <property type="match status" value="1"/>
</dbReference>
<dbReference type="SMART" id="SM00343">
    <property type="entry name" value="ZnF_C2HC"/>
    <property type="match status" value="2"/>
</dbReference>
<dbReference type="SUPFAM" id="SSF50630">
    <property type="entry name" value="Acid proteases"/>
    <property type="match status" value="1"/>
</dbReference>
<dbReference type="SUPFAM" id="SSF56672">
    <property type="entry name" value="DNA/RNA polymerases"/>
    <property type="match status" value="1"/>
</dbReference>
<dbReference type="SUPFAM" id="SSF47836">
    <property type="entry name" value="Retroviral matrix proteins"/>
    <property type="match status" value="1"/>
</dbReference>
<dbReference type="SUPFAM" id="SSF47353">
    <property type="entry name" value="Retrovirus capsid dimerization domain-like"/>
    <property type="match status" value="1"/>
</dbReference>
<dbReference type="SUPFAM" id="SSF47943">
    <property type="entry name" value="Retrovirus capsid protein, N-terminal core domain"/>
    <property type="match status" value="1"/>
</dbReference>
<dbReference type="SUPFAM" id="SSF57756">
    <property type="entry name" value="Retrovirus zinc finger-like domains"/>
    <property type="match status" value="1"/>
</dbReference>
<dbReference type="SUPFAM" id="SSF53098">
    <property type="entry name" value="Ribonuclease H-like"/>
    <property type="match status" value="1"/>
</dbReference>
<dbReference type="PROSITE" id="PS50175">
    <property type="entry name" value="ASP_PROT_RETROV"/>
    <property type="match status" value="1"/>
</dbReference>
<dbReference type="PROSITE" id="PS00141">
    <property type="entry name" value="ASP_PROTEASE"/>
    <property type="match status" value="1"/>
</dbReference>
<dbReference type="PROSITE" id="PS50994">
    <property type="entry name" value="INTEGRASE"/>
    <property type="match status" value="1"/>
</dbReference>
<dbReference type="PROSITE" id="PS51027">
    <property type="entry name" value="INTEGRASE_DBD"/>
    <property type="match status" value="1"/>
</dbReference>
<dbReference type="PROSITE" id="PS50879">
    <property type="entry name" value="RNASE_H_1"/>
    <property type="match status" value="1"/>
</dbReference>
<dbReference type="PROSITE" id="PS50878">
    <property type="entry name" value="RT_POL"/>
    <property type="match status" value="1"/>
</dbReference>
<dbReference type="PROSITE" id="PS50158">
    <property type="entry name" value="ZF_CCHC"/>
    <property type="match status" value="1"/>
</dbReference>
<feature type="initiator methionine" description="Removed; by host" evidence="1">
    <location>
        <position position="1"/>
    </location>
</feature>
<feature type="chain" id="PRO_0000259842" description="Gag-Pro-Pol polyprotein" evidence="1">
    <location>
        <begin position="2"/>
        <end position="1440"/>
    </location>
</feature>
<feature type="chain" id="PRO_0000259843" description="Matrix protein p19" evidence="1">
    <location>
        <begin position="2"/>
        <end position="123"/>
    </location>
</feature>
<feature type="chain" id="PRO_0000259844" description="Capsid protein p24" evidence="1">
    <location>
        <begin position="124"/>
        <end position="337"/>
    </location>
</feature>
<feature type="chain" id="PRO_0000259845" description="Nucleocapsid protein p15-pro" evidence="1">
    <location>
        <begin position="338"/>
        <end position="430"/>
    </location>
</feature>
<feature type="chain" id="PRO_0000259846" description="Protease" evidence="1">
    <location>
        <begin position="431"/>
        <end position="553"/>
    </location>
</feature>
<feature type="peptide" id="PRO_0000259847" description="p1" evidence="1">
    <location>
        <begin position="554"/>
        <end position="561"/>
    </location>
</feature>
<feature type="chain" id="PRO_0000259848" description="Reverse transcriptase/ribonuclease H" evidence="1">
    <location>
        <begin position="562"/>
        <end position="1145"/>
    </location>
</feature>
<feature type="chain" id="PRO_0000259849" description="Integrase" evidence="1">
    <location>
        <begin position="1146"/>
        <end position="1440"/>
    </location>
</feature>
<feature type="domain" description="Peptidase A2" evidence="4">
    <location>
        <begin position="457"/>
        <end position="535"/>
    </location>
</feature>
<feature type="domain" description="Reverse transcriptase" evidence="5">
    <location>
        <begin position="593"/>
        <end position="783"/>
    </location>
</feature>
<feature type="domain" description="RNase H type-1" evidence="6">
    <location>
        <begin position="1010"/>
        <end position="1143"/>
    </location>
</feature>
<feature type="domain" description="Integrase catalytic" evidence="7">
    <location>
        <begin position="1197"/>
        <end position="1366"/>
    </location>
</feature>
<feature type="zinc finger region" description="CCHC-type 1" evidence="3">
    <location>
        <begin position="349"/>
        <end position="366"/>
    </location>
</feature>
<feature type="zinc finger region" description="CCHC-type 2" evidence="3">
    <location>
        <begin position="372"/>
        <end position="389"/>
    </location>
</feature>
<feature type="DNA-binding region" description="Integrase-type" evidence="8">
    <location>
        <begin position="1371"/>
        <end position="1420"/>
    </location>
</feature>
<feature type="region of interest" description="Disordered" evidence="10">
    <location>
        <begin position="95"/>
        <end position="116"/>
    </location>
</feature>
<feature type="short sequence motif" description="PTAP/PSAP motif">
    <location>
        <begin position="98"/>
        <end position="101"/>
    </location>
</feature>
<feature type="short sequence motif" description="PPXY motif">
    <location>
        <begin position="109"/>
        <end position="112"/>
    </location>
</feature>
<feature type="active site" description="For protease activity; shared with dimeric partner" evidence="9">
    <location>
        <position position="462"/>
    </location>
</feature>
<feature type="binding site" evidence="1">
    <location>
        <position position="659"/>
    </location>
    <ligand>
        <name>Mg(2+)</name>
        <dbReference type="ChEBI" id="CHEBI:18420"/>
        <label>1</label>
        <note>catalytic; for reverse transcriptase activity</note>
    </ligand>
</feature>
<feature type="binding site" evidence="1">
    <location>
        <position position="734"/>
    </location>
    <ligand>
        <name>Mg(2+)</name>
        <dbReference type="ChEBI" id="CHEBI:18420"/>
        <label>1</label>
        <note>catalytic; for reverse transcriptase activity</note>
    </ligand>
</feature>
<feature type="binding site" evidence="1">
    <location>
        <position position="735"/>
    </location>
    <ligand>
        <name>Mg(2+)</name>
        <dbReference type="ChEBI" id="CHEBI:18420"/>
        <label>1</label>
        <note>catalytic; for reverse transcriptase activity</note>
    </ligand>
</feature>
<feature type="binding site" evidence="1">
    <location>
        <position position="1019"/>
    </location>
    <ligand>
        <name>Mg(2+)</name>
        <dbReference type="ChEBI" id="CHEBI:18420"/>
        <label>2</label>
        <note>catalytic; for RNase H activity</note>
    </ligand>
</feature>
<feature type="binding site" evidence="1">
    <location>
        <position position="1052"/>
    </location>
    <ligand>
        <name>Mg(2+)</name>
        <dbReference type="ChEBI" id="CHEBI:18420"/>
        <label>2</label>
        <note>catalytic; for RNase H activity</note>
    </ligand>
</feature>
<feature type="binding site" evidence="1">
    <location>
        <position position="1074"/>
    </location>
    <ligand>
        <name>Mg(2+)</name>
        <dbReference type="ChEBI" id="CHEBI:18420"/>
        <label>2</label>
        <note>catalytic; for RNase H activity</note>
    </ligand>
</feature>
<feature type="binding site" evidence="1">
    <location>
        <position position="1135"/>
    </location>
    <ligand>
        <name>Mg(2+)</name>
        <dbReference type="ChEBI" id="CHEBI:18420"/>
        <label>2</label>
        <note>catalytic; for RNase H activity</note>
    </ligand>
</feature>
<feature type="binding site" evidence="1">
    <location>
        <position position="1208"/>
    </location>
    <ligand>
        <name>Mg(2+)</name>
        <dbReference type="ChEBI" id="CHEBI:18420"/>
        <label>3</label>
        <note>catalytic; for integrase activity</note>
    </ligand>
</feature>
<feature type="binding site" evidence="1">
    <location>
        <position position="1265"/>
    </location>
    <ligand>
        <name>Mg(2+)</name>
        <dbReference type="ChEBI" id="CHEBI:18420"/>
        <label>3</label>
        <note>catalytic; for integrase activity</note>
    </ligand>
</feature>
<feature type="site" description="Cleavage; by viral protease" evidence="1">
    <location>
        <begin position="123"/>
        <end position="124"/>
    </location>
</feature>
<feature type="site" description="Cleavage; by viral protease" evidence="1">
    <location>
        <begin position="337"/>
        <end position="338"/>
    </location>
</feature>
<feature type="site" description="Cleavage; by viral protease" evidence="1">
    <location>
        <begin position="430"/>
        <end position="431"/>
    </location>
</feature>
<feature type="site" description="Cleavage; by viral protease" evidence="1">
    <location>
        <begin position="553"/>
        <end position="554"/>
    </location>
</feature>
<feature type="site" description="Cleavage; by viral protease" evidence="1">
    <location>
        <begin position="561"/>
        <end position="562"/>
    </location>
</feature>
<feature type="site" description="Cleavage; by viral protease" evidence="1">
    <location>
        <begin position="1145"/>
        <end position="1146"/>
    </location>
</feature>
<feature type="lipid moiety-binding region" description="N-myristoyl glycine; by host" evidence="1">
    <location>
        <position position="2"/>
    </location>
</feature>
<keyword id="KW-0064">Aspartyl protease</keyword>
<keyword id="KW-0167">Capsid protein</keyword>
<keyword id="KW-0229">DNA integration</keyword>
<keyword id="KW-0233">DNA recombination</keyword>
<keyword id="KW-0238">DNA-binding</keyword>
<keyword id="KW-0255">Endonuclease</keyword>
<keyword id="KW-1262">Eukaryotic host gene expression shutoff by virus</keyword>
<keyword id="KW-1193">Eukaryotic host translation shutoff by virus</keyword>
<keyword id="KW-1190">Host gene expression shutoff by virus</keyword>
<keyword id="KW-0945">Host-virus interaction</keyword>
<keyword id="KW-0378">Hydrolase</keyword>
<keyword id="KW-0449">Lipoprotein</keyword>
<keyword id="KW-0460">Magnesium</keyword>
<keyword id="KW-0479">Metal-binding</keyword>
<keyword id="KW-0511">Multifunctional enzyme</keyword>
<keyword id="KW-0519">Myristate</keyword>
<keyword id="KW-0540">Nuclease</keyword>
<keyword id="KW-0548">Nucleotidyltransferase</keyword>
<keyword id="KW-0645">Protease</keyword>
<keyword id="KW-1185">Reference proteome</keyword>
<keyword id="KW-0677">Repeat</keyword>
<keyword id="KW-0688">Ribosomal frameshifting</keyword>
<keyword id="KW-0695">RNA-directed DNA polymerase</keyword>
<keyword id="KW-0808">Transferase</keyword>
<keyword id="KW-1179">Viral genome integration</keyword>
<keyword id="KW-0543">Viral nucleoprotein</keyword>
<keyword id="KW-0946">Virion</keyword>
<keyword id="KW-1160">Virus entry into host cell</keyword>
<keyword id="KW-0862">Zinc</keyword>
<keyword id="KW-0863">Zinc-finger</keyword>
<evidence type="ECO:0000250" key="1"/>
<evidence type="ECO:0000250" key="2">
    <source>
        <dbReference type="UniProtKB" id="P03363"/>
    </source>
</evidence>
<evidence type="ECO:0000255" key="3">
    <source>
        <dbReference type="PROSITE-ProRule" id="PRU00047"/>
    </source>
</evidence>
<evidence type="ECO:0000255" key="4">
    <source>
        <dbReference type="PROSITE-ProRule" id="PRU00275"/>
    </source>
</evidence>
<evidence type="ECO:0000255" key="5">
    <source>
        <dbReference type="PROSITE-ProRule" id="PRU00405"/>
    </source>
</evidence>
<evidence type="ECO:0000255" key="6">
    <source>
        <dbReference type="PROSITE-ProRule" id="PRU00408"/>
    </source>
</evidence>
<evidence type="ECO:0000255" key="7">
    <source>
        <dbReference type="PROSITE-ProRule" id="PRU00457"/>
    </source>
</evidence>
<evidence type="ECO:0000255" key="8">
    <source>
        <dbReference type="PROSITE-ProRule" id="PRU00506"/>
    </source>
</evidence>
<evidence type="ECO:0000255" key="9">
    <source>
        <dbReference type="PROSITE-ProRule" id="PRU10094"/>
    </source>
</evidence>
<evidence type="ECO:0000256" key="10">
    <source>
        <dbReference type="SAM" id="MobiDB-lite"/>
    </source>
</evidence>
<evidence type="ECO:0000305" key="11"/>
<organismHost>
    <name type="scientific">Homo sapiens</name>
    <name type="common">Human</name>
    <dbReference type="NCBI Taxonomy" id="9606"/>
</organismHost>